<gene>
    <name evidence="1" type="primary">uvrC</name>
    <name type="ordered locus">LVIS_1383</name>
</gene>
<protein>
    <recommendedName>
        <fullName evidence="1">UvrABC system protein C</fullName>
        <shortName evidence="1">Protein UvrC</shortName>
    </recommendedName>
    <alternativeName>
        <fullName evidence="1">Excinuclease ABC subunit C</fullName>
    </alternativeName>
</protein>
<organism>
    <name type="scientific">Levilactobacillus brevis (strain ATCC 367 / BCRC 12310 / CIP 105137 / JCM 1170 / LMG 11437 / NCIMB 947 / NCTC 947)</name>
    <name type="common">Lactobacillus brevis</name>
    <dbReference type="NCBI Taxonomy" id="387344"/>
    <lineage>
        <taxon>Bacteria</taxon>
        <taxon>Bacillati</taxon>
        <taxon>Bacillota</taxon>
        <taxon>Bacilli</taxon>
        <taxon>Lactobacillales</taxon>
        <taxon>Lactobacillaceae</taxon>
        <taxon>Levilactobacillus</taxon>
    </lineage>
</organism>
<accession>Q03QP1</accession>
<name>UVRC_LEVBA</name>
<dbReference type="EMBL" id="CP000416">
    <property type="protein sequence ID" value="ABJ64481.1"/>
    <property type="molecule type" value="Genomic_DNA"/>
</dbReference>
<dbReference type="RefSeq" id="WP_011668054.1">
    <property type="nucleotide sequence ID" value="NC_008497.1"/>
</dbReference>
<dbReference type="SMR" id="Q03QP1"/>
<dbReference type="STRING" id="387344.LVIS_1383"/>
<dbReference type="KEGG" id="lbr:LVIS_1383"/>
<dbReference type="eggNOG" id="COG0322">
    <property type="taxonomic scope" value="Bacteria"/>
</dbReference>
<dbReference type="HOGENOM" id="CLU_014841_3_2_9"/>
<dbReference type="Proteomes" id="UP000001652">
    <property type="component" value="Chromosome"/>
</dbReference>
<dbReference type="GO" id="GO:0005737">
    <property type="term" value="C:cytoplasm"/>
    <property type="evidence" value="ECO:0007669"/>
    <property type="project" value="UniProtKB-SubCell"/>
</dbReference>
<dbReference type="GO" id="GO:0009380">
    <property type="term" value="C:excinuclease repair complex"/>
    <property type="evidence" value="ECO:0007669"/>
    <property type="project" value="InterPro"/>
</dbReference>
<dbReference type="GO" id="GO:0003677">
    <property type="term" value="F:DNA binding"/>
    <property type="evidence" value="ECO:0007669"/>
    <property type="project" value="UniProtKB-UniRule"/>
</dbReference>
<dbReference type="GO" id="GO:0009381">
    <property type="term" value="F:excinuclease ABC activity"/>
    <property type="evidence" value="ECO:0007669"/>
    <property type="project" value="UniProtKB-UniRule"/>
</dbReference>
<dbReference type="GO" id="GO:0006289">
    <property type="term" value="P:nucleotide-excision repair"/>
    <property type="evidence" value="ECO:0007669"/>
    <property type="project" value="UniProtKB-UniRule"/>
</dbReference>
<dbReference type="GO" id="GO:0009432">
    <property type="term" value="P:SOS response"/>
    <property type="evidence" value="ECO:0007669"/>
    <property type="project" value="UniProtKB-UniRule"/>
</dbReference>
<dbReference type="CDD" id="cd10434">
    <property type="entry name" value="GIY-YIG_UvrC_Cho"/>
    <property type="match status" value="1"/>
</dbReference>
<dbReference type="FunFam" id="3.30.420.340:FF:000002">
    <property type="entry name" value="UvrABC system protein C"/>
    <property type="match status" value="1"/>
</dbReference>
<dbReference type="FunFam" id="3.40.1440.10:FF:000001">
    <property type="entry name" value="UvrABC system protein C"/>
    <property type="match status" value="1"/>
</dbReference>
<dbReference type="Gene3D" id="1.10.150.20">
    <property type="entry name" value="5' to 3' exonuclease, C-terminal subdomain"/>
    <property type="match status" value="1"/>
</dbReference>
<dbReference type="Gene3D" id="3.40.1440.10">
    <property type="entry name" value="GIY-YIG endonuclease"/>
    <property type="match status" value="1"/>
</dbReference>
<dbReference type="Gene3D" id="4.10.860.10">
    <property type="entry name" value="UVR domain"/>
    <property type="match status" value="1"/>
</dbReference>
<dbReference type="Gene3D" id="3.30.420.340">
    <property type="entry name" value="UvrC, RNAse H endonuclease domain"/>
    <property type="match status" value="1"/>
</dbReference>
<dbReference type="HAMAP" id="MF_00203">
    <property type="entry name" value="UvrC"/>
    <property type="match status" value="1"/>
</dbReference>
<dbReference type="InterPro" id="IPR000305">
    <property type="entry name" value="GIY-YIG_endonuc"/>
</dbReference>
<dbReference type="InterPro" id="IPR035901">
    <property type="entry name" value="GIY-YIG_endonuc_sf"/>
</dbReference>
<dbReference type="InterPro" id="IPR047296">
    <property type="entry name" value="GIY-YIG_UvrC_Cho"/>
</dbReference>
<dbReference type="InterPro" id="IPR010994">
    <property type="entry name" value="RuvA_2-like"/>
</dbReference>
<dbReference type="InterPro" id="IPR001943">
    <property type="entry name" value="UVR_dom"/>
</dbReference>
<dbReference type="InterPro" id="IPR036876">
    <property type="entry name" value="UVR_dom_sf"/>
</dbReference>
<dbReference type="InterPro" id="IPR050066">
    <property type="entry name" value="UvrABC_protein_C"/>
</dbReference>
<dbReference type="InterPro" id="IPR004791">
    <property type="entry name" value="UvrC"/>
</dbReference>
<dbReference type="InterPro" id="IPR001162">
    <property type="entry name" value="UvrC_RNase_H_dom"/>
</dbReference>
<dbReference type="InterPro" id="IPR038476">
    <property type="entry name" value="UvrC_RNase_H_dom_sf"/>
</dbReference>
<dbReference type="NCBIfam" id="TIGR00194">
    <property type="entry name" value="uvrC"/>
    <property type="match status" value="1"/>
</dbReference>
<dbReference type="PANTHER" id="PTHR30562:SF1">
    <property type="entry name" value="UVRABC SYSTEM PROTEIN C"/>
    <property type="match status" value="1"/>
</dbReference>
<dbReference type="PANTHER" id="PTHR30562">
    <property type="entry name" value="UVRC/OXIDOREDUCTASE"/>
    <property type="match status" value="1"/>
</dbReference>
<dbReference type="Pfam" id="PF01541">
    <property type="entry name" value="GIY-YIG"/>
    <property type="match status" value="1"/>
</dbReference>
<dbReference type="Pfam" id="PF14520">
    <property type="entry name" value="HHH_5"/>
    <property type="match status" value="1"/>
</dbReference>
<dbReference type="Pfam" id="PF02151">
    <property type="entry name" value="UVR"/>
    <property type="match status" value="1"/>
</dbReference>
<dbReference type="Pfam" id="PF22920">
    <property type="entry name" value="UvrC_RNaseH"/>
    <property type="match status" value="1"/>
</dbReference>
<dbReference type="Pfam" id="PF08459">
    <property type="entry name" value="UvrC_RNaseH_dom"/>
    <property type="match status" value="1"/>
</dbReference>
<dbReference type="SMART" id="SM00465">
    <property type="entry name" value="GIYc"/>
    <property type="match status" value="1"/>
</dbReference>
<dbReference type="SUPFAM" id="SSF46600">
    <property type="entry name" value="C-terminal UvrC-binding domain of UvrB"/>
    <property type="match status" value="1"/>
</dbReference>
<dbReference type="SUPFAM" id="SSF82771">
    <property type="entry name" value="GIY-YIG endonuclease"/>
    <property type="match status" value="1"/>
</dbReference>
<dbReference type="SUPFAM" id="SSF47781">
    <property type="entry name" value="RuvA domain 2-like"/>
    <property type="match status" value="1"/>
</dbReference>
<dbReference type="PROSITE" id="PS50164">
    <property type="entry name" value="GIY_YIG"/>
    <property type="match status" value="1"/>
</dbReference>
<dbReference type="PROSITE" id="PS50151">
    <property type="entry name" value="UVR"/>
    <property type="match status" value="1"/>
</dbReference>
<dbReference type="PROSITE" id="PS50165">
    <property type="entry name" value="UVRC"/>
    <property type="match status" value="1"/>
</dbReference>
<proteinExistence type="inferred from homology"/>
<keyword id="KW-0963">Cytoplasm</keyword>
<keyword id="KW-0227">DNA damage</keyword>
<keyword id="KW-0228">DNA excision</keyword>
<keyword id="KW-0234">DNA repair</keyword>
<keyword id="KW-0267">Excision nuclease</keyword>
<keyword id="KW-1185">Reference proteome</keyword>
<keyword id="KW-0742">SOS response</keyword>
<sequence>MASEYLEHKLALLPGLPGCYLMKNINSQIIYVGKAKNLKNRVRSYFKSSHTGKTAQLVSEIVDFETIITSTDKEAFLLEITLIQKHQPYFNIKLKRGTGYPYIKITNERDPQLLLVSDIRKDGAYYFGPYPNVYAAEETMHFLQKVYPLRRCPGHQGRPCLYYHMGQCLGACFKEVPEAEYDQQIRKIKSFLNGNVGHAKKDLTQRMEKAAADMAYERAGDLRDQIRYIEATVEKQKIISNDSTPRDIFNFYLDKGWLSIQVFFIRQARLMKREKRLFPVVNSAEEELASFIVQFYQRKNTVLPREILVPASIDHDVIEELLKVPVRTPQRGTKRDLLEMAGKNAKLVLEEKFRLLELDEGKTTGAMKEITDALGIAPGHKIEAFDHSHIQGADLVSAMVVFVDGQPNKKLYRKYKLQTVDHADETASTLEVIRRRYGRLLKEHAPMPDLILMDGGDIQMNAVKEVLEDEFDLHIPVAGMVKNDHHKTADLLFGPDDHHVHLDPKSQGFYLVQRIQDEVHRFAISFHRQVHTKHSLSSRLDRIPGVGPKTRNKLLRKFGSTKKISEASMAEIRELGISEAVARTIHVTLAAETAEIKNPRTPTSL</sequence>
<comment type="function">
    <text evidence="1">The UvrABC repair system catalyzes the recognition and processing of DNA lesions. UvrC both incises the 5' and 3' sides of the lesion. The N-terminal half is responsible for the 3' incision and the C-terminal half is responsible for the 5' incision.</text>
</comment>
<comment type="subunit">
    <text evidence="1">Interacts with UvrB in an incision complex.</text>
</comment>
<comment type="subcellular location">
    <subcellularLocation>
        <location evidence="1">Cytoplasm</location>
    </subcellularLocation>
</comment>
<comment type="similarity">
    <text evidence="1">Belongs to the UvrC family.</text>
</comment>
<evidence type="ECO:0000255" key="1">
    <source>
        <dbReference type="HAMAP-Rule" id="MF_00203"/>
    </source>
</evidence>
<feature type="chain" id="PRO_1000077795" description="UvrABC system protein C">
    <location>
        <begin position="1"/>
        <end position="605"/>
    </location>
</feature>
<feature type="domain" description="GIY-YIG" evidence="1">
    <location>
        <begin position="15"/>
        <end position="92"/>
    </location>
</feature>
<feature type="domain" description="UVR" evidence="1">
    <location>
        <begin position="197"/>
        <end position="232"/>
    </location>
</feature>
<reference key="1">
    <citation type="journal article" date="2006" name="Proc. Natl. Acad. Sci. U.S.A.">
        <title>Comparative genomics of the lactic acid bacteria.</title>
        <authorList>
            <person name="Makarova K.S."/>
            <person name="Slesarev A."/>
            <person name="Wolf Y.I."/>
            <person name="Sorokin A."/>
            <person name="Mirkin B."/>
            <person name="Koonin E.V."/>
            <person name="Pavlov A."/>
            <person name="Pavlova N."/>
            <person name="Karamychev V."/>
            <person name="Polouchine N."/>
            <person name="Shakhova V."/>
            <person name="Grigoriev I."/>
            <person name="Lou Y."/>
            <person name="Rohksar D."/>
            <person name="Lucas S."/>
            <person name="Huang K."/>
            <person name="Goodstein D.M."/>
            <person name="Hawkins T."/>
            <person name="Plengvidhya V."/>
            <person name="Welker D."/>
            <person name="Hughes J."/>
            <person name="Goh Y."/>
            <person name="Benson A."/>
            <person name="Baldwin K."/>
            <person name="Lee J.-H."/>
            <person name="Diaz-Muniz I."/>
            <person name="Dosti B."/>
            <person name="Smeianov V."/>
            <person name="Wechter W."/>
            <person name="Barabote R."/>
            <person name="Lorca G."/>
            <person name="Altermann E."/>
            <person name="Barrangou R."/>
            <person name="Ganesan B."/>
            <person name="Xie Y."/>
            <person name="Rawsthorne H."/>
            <person name="Tamir D."/>
            <person name="Parker C."/>
            <person name="Breidt F."/>
            <person name="Broadbent J.R."/>
            <person name="Hutkins R."/>
            <person name="O'Sullivan D."/>
            <person name="Steele J."/>
            <person name="Unlu G."/>
            <person name="Saier M.H. Jr."/>
            <person name="Klaenhammer T."/>
            <person name="Richardson P."/>
            <person name="Kozyavkin S."/>
            <person name="Weimer B.C."/>
            <person name="Mills D.A."/>
        </authorList>
    </citation>
    <scope>NUCLEOTIDE SEQUENCE [LARGE SCALE GENOMIC DNA]</scope>
    <source>
        <strain>ATCC 367 / BCRC 12310 / CIP 105137 / JCM 1170 / LMG 11437 / NCIMB 947 / NCTC 947</strain>
    </source>
</reference>